<feature type="chain" id="PRO_0000054818" description="WW domain-containing oxidoreductase">
    <location>
        <begin position="1"/>
        <end position="414"/>
    </location>
</feature>
<feature type="domain" description="WW 1" evidence="3">
    <location>
        <begin position="16"/>
        <end position="49"/>
    </location>
</feature>
<feature type="domain" description="WW 2" evidence="3">
    <location>
        <begin position="57"/>
        <end position="90"/>
    </location>
</feature>
<feature type="region of interest" description="Disordered" evidence="4">
    <location>
        <begin position="1"/>
        <end position="23"/>
    </location>
</feature>
<feature type="short sequence motif" description="Nuclear localization signal" evidence="1">
    <location>
        <begin position="50"/>
        <end position="55"/>
    </location>
</feature>
<feature type="active site" description="Proton acceptor" evidence="1">
    <location>
        <position position="293"/>
    </location>
</feature>
<feature type="binding site" evidence="1">
    <location>
        <begin position="131"/>
        <end position="137"/>
    </location>
    <ligand>
        <name>NADP(+)</name>
        <dbReference type="ChEBI" id="CHEBI:58349"/>
    </ligand>
</feature>
<feature type="binding site" evidence="1">
    <location>
        <position position="260"/>
    </location>
    <ligand>
        <name>substrate</name>
    </ligand>
</feature>
<dbReference type="EC" id="1.1.1.-"/>
<dbReference type="EMBL" id="AJ851761">
    <property type="protein sequence ID" value="CAH65395.1"/>
    <property type="status" value="ALT_FRAME"/>
    <property type="molecule type" value="mRNA"/>
</dbReference>
<dbReference type="RefSeq" id="NP_001025745.2">
    <property type="nucleotide sequence ID" value="NM_001030574.3"/>
</dbReference>
<dbReference type="SMR" id="Q5F389"/>
<dbReference type="FunCoup" id="Q5F389">
    <property type="interactions" value="513"/>
</dbReference>
<dbReference type="STRING" id="9031.ENSGALP00000008618"/>
<dbReference type="PaxDb" id="9031-ENSGALP00000008618"/>
<dbReference type="Ensembl" id="ENSGALT00010018550.1">
    <property type="protein sequence ID" value="ENSGALP00010010153.1"/>
    <property type="gene ID" value="ENSGALG00010007789.1"/>
</dbReference>
<dbReference type="GeneID" id="415801"/>
<dbReference type="KEGG" id="gga:415801"/>
<dbReference type="CTD" id="51741"/>
<dbReference type="VEuPathDB" id="HostDB:geneid_415801"/>
<dbReference type="eggNOG" id="KOG1208">
    <property type="taxonomic scope" value="Eukaryota"/>
</dbReference>
<dbReference type="GeneTree" id="ENSGT00940000157389"/>
<dbReference type="InParanoid" id="Q5F389"/>
<dbReference type="OMA" id="PPAEKYW"/>
<dbReference type="OrthoDB" id="9989144at2759"/>
<dbReference type="PhylomeDB" id="Q5F389"/>
<dbReference type="PRO" id="PR:Q5F389"/>
<dbReference type="Proteomes" id="UP000000539">
    <property type="component" value="Chromosome 11"/>
</dbReference>
<dbReference type="GO" id="GO:0005829">
    <property type="term" value="C:cytosol"/>
    <property type="evidence" value="ECO:0007669"/>
    <property type="project" value="Ensembl"/>
</dbReference>
<dbReference type="GO" id="GO:0005794">
    <property type="term" value="C:Golgi apparatus"/>
    <property type="evidence" value="ECO:0007669"/>
    <property type="project" value="UniProtKB-SubCell"/>
</dbReference>
<dbReference type="GO" id="GO:0005764">
    <property type="term" value="C:lysosome"/>
    <property type="evidence" value="ECO:0007669"/>
    <property type="project" value="UniProtKB-SubCell"/>
</dbReference>
<dbReference type="GO" id="GO:0005902">
    <property type="term" value="C:microvillus"/>
    <property type="evidence" value="ECO:0007669"/>
    <property type="project" value="Ensembl"/>
</dbReference>
<dbReference type="GO" id="GO:0005739">
    <property type="term" value="C:mitochondrion"/>
    <property type="evidence" value="ECO:0007669"/>
    <property type="project" value="UniProtKB-SubCell"/>
</dbReference>
<dbReference type="GO" id="GO:0005886">
    <property type="term" value="C:plasma membrane"/>
    <property type="evidence" value="ECO:0007669"/>
    <property type="project" value="Ensembl"/>
</dbReference>
<dbReference type="GO" id="GO:0090575">
    <property type="term" value="C:RNA polymerase II transcription regulator complex"/>
    <property type="evidence" value="ECO:0007669"/>
    <property type="project" value="Ensembl"/>
</dbReference>
<dbReference type="GO" id="GO:0019899">
    <property type="term" value="F:enzyme binding"/>
    <property type="evidence" value="ECO:0007669"/>
    <property type="project" value="Ensembl"/>
</dbReference>
<dbReference type="GO" id="GO:0016491">
    <property type="term" value="F:oxidoreductase activity"/>
    <property type="evidence" value="ECO:0007669"/>
    <property type="project" value="UniProtKB-KW"/>
</dbReference>
<dbReference type="GO" id="GO:0003713">
    <property type="term" value="F:transcription coactivator activity"/>
    <property type="evidence" value="ECO:0007669"/>
    <property type="project" value="Ensembl"/>
</dbReference>
<dbReference type="GO" id="GO:0071560">
    <property type="term" value="P:cellular response to transforming growth factor beta stimulus"/>
    <property type="evidence" value="ECO:0007669"/>
    <property type="project" value="Ensembl"/>
</dbReference>
<dbReference type="GO" id="GO:0097191">
    <property type="term" value="P:extrinsic apoptotic signaling pathway"/>
    <property type="evidence" value="ECO:0007669"/>
    <property type="project" value="Ensembl"/>
</dbReference>
<dbReference type="GO" id="GO:0072332">
    <property type="term" value="P:intrinsic apoptotic signaling pathway by p53 class mediator"/>
    <property type="evidence" value="ECO:0007669"/>
    <property type="project" value="Ensembl"/>
</dbReference>
<dbReference type="GO" id="GO:0030178">
    <property type="term" value="P:negative regulation of Wnt signaling pathway"/>
    <property type="evidence" value="ECO:0007669"/>
    <property type="project" value="Ensembl"/>
</dbReference>
<dbReference type="GO" id="GO:0001649">
    <property type="term" value="P:osteoblast differentiation"/>
    <property type="evidence" value="ECO:0007669"/>
    <property type="project" value="Ensembl"/>
</dbReference>
<dbReference type="GO" id="GO:2001241">
    <property type="term" value="P:positive regulation of extrinsic apoptotic signaling pathway in absence of ligand"/>
    <property type="evidence" value="ECO:0007669"/>
    <property type="project" value="Ensembl"/>
</dbReference>
<dbReference type="GO" id="GO:0045944">
    <property type="term" value="P:positive regulation of transcription by RNA polymerase II"/>
    <property type="evidence" value="ECO:0007669"/>
    <property type="project" value="Ensembl"/>
</dbReference>
<dbReference type="GO" id="GO:0048705">
    <property type="term" value="P:skeletal system morphogenesis"/>
    <property type="evidence" value="ECO:0007669"/>
    <property type="project" value="Ensembl"/>
</dbReference>
<dbReference type="GO" id="GO:0016055">
    <property type="term" value="P:Wnt signaling pathway"/>
    <property type="evidence" value="ECO:0007669"/>
    <property type="project" value="UniProtKB-KW"/>
</dbReference>
<dbReference type="CDD" id="cd09809">
    <property type="entry name" value="human_WWOX_like_SDR_c-like"/>
    <property type="match status" value="1"/>
</dbReference>
<dbReference type="CDD" id="cd00201">
    <property type="entry name" value="WW"/>
    <property type="match status" value="2"/>
</dbReference>
<dbReference type="FunFam" id="2.20.70.10:FF:000032">
    <property type="entry name" value="WW domain containing oxidoreductase"/>
    <property type="match status" value="1"/>
</dbReference>
<dbReference type="FunFam" id="2.20.70.10:FF:000040">
    <property type="entry name" value="WW domain containing oxidoreductase"/>
    <property type="match status" value="1"/>
</dbReference>
<dbReference type="FunFam" id="3.40.50.720:FF:000353">
    <property type="entry name" value="WW domain-containing oxidoreductase"/>
    <property type="match status" value="1"/>
</dbReference>
<dbReference type="Gene3D" id="2.20.70.10">
    <property type="match status" value="2"/>
</dbReference>
<dbReference type="Gene3D" id="3.40.50.720">
    <property type="entry name" value="NAD(P)-binding Rossmann-like Domain"/>
    <property type="match status" value="1"/>
</dbReference>
<dbReference type="InterPro" id="IPR036291">
    <property type="entry name" value="NAD(P)-bd_dom_sf"/>
</dbReference>
<dbReference type="InterPro" id="IPR002347">
    <property type="entry name" value="SDR_fam"/>
</dbReference>
<dbReference type="InterPro" id="IPR001202">
    <property type="entry name" value="WW_dom"/>
</dbReference>
<dbReference type="InterPro" id="IPR036020">
    <property type="entry name" value="WW_dom_sf"/>
</dbReference>
<dbReference type="InterPro" id="IPR042732">
    <property type="entry name" value="WWOX_SDR_c-like"/>
</dbReference>
<dbReference type="PANTHER" id="PTHR24320">
    <property type="entry name" value="RETINOL DEHYDROGENASE"/>
    <property type="match status" value="1"/>
</dbReference>
<dbReference type="PANTHER" id="PTHR24320:SF282">
    <property type="entry name" value="WW DOMAIN-CONTAINING OXIDOREDUCTASE"/>
    <property type="match status" value="1"/>
</dbReference>
<dbReference type="Pfam" id="PF00106">
    <property type="entry name" value="adh_short"/>
    <property type="match status" value="1"/>
</dbReference>
<dbReference type="Pfam" id="PF00397">
    <property type="entry name" value="WW"/>
    <property type="match status" value="2"/>
</dbReference>
<dbReference type="PRINTS" id="PR00081">
    <property type="entry name" value="GDHRDH"/>
</dbReference>
<dbReference type="SMART" id="SM00456">
    <property type="entry name" value="WW"/>
    <property type="match status" value="2"/>
</dbReference>
<dbReference type="SUPFAM" id="SSF51735">
    <property type="entry name" value="NAD(P)-binding Rossmann-fold domains"/>
    <property type="match status" value="1"/>
</dbReference>
<dbReference type="SUPFAM" id="SSF51045">
    <property type="entry name" value="WW domain"/>
    <property type="match status" value="2"/>
</dbReference>
<dbReference type="PROSITE" id="PS01159">
    <property type="entry name" value="WW_DOMAIN_1"/>
    <property type="match status" value="2"/>
</dbReference>
<dbReference type="PROSITE" id="PS50020">
    <property type="entry name" value="WW_DOMAIN_2"/>
    <property type="match status" value="2"/>
</dbReference>
<gene>
    <name type="primary">WWOX</name>
    <name type="ORF">RCJMB04_28b1</name>
</gene>
<protein>
    <recommendedName>
        <fullName>WW domain-containing oxidoreductase</fullName>
        <ecNumber>1.1.1.-</ecNumber>
    </recommendedName>
</protein>
<comment type="function">
    <text evidence="2">Putative oxidoreductase. Acts as a tumor suppressor and plays a role in apoptosis. May function synergistically with p53/TP53 to control genotoxic stress-induced cell death. Plays a role in TGFB1 signaling and TGFB1-mediated cell death. May also play a role in tumor necrosis factor (TNF)-mediated cell death. Required for normal bone development. Inhibits Wnt signaling (By similarity).</text>
</comment>
<comment type="subcellular location">
    <subcellularLocation>
        <location evidence="2">Cytoplasm</location>
    </subcellularLocation>
    <subcellularLocation>
        <location evidence="2">Mitochondrion</location>
    </subcellularLocation>
    <subcellularLocation>
        <location evidence="2">Golgi apparatus</location>
    </subcellularLocation>
    <subcellularLocation>
        <location evidence="2">Lysosome</location>
    </subcellularLocation>
</comment>
<comment type="similarity">
    <text evidence="5">Belongs to the short-chain dehydrogenases/reductases (SDR) family.</text>
</comment>
<comment type="sequence caution" evidence="5">
    <conflict type="frameshift">
        <sequence resource="EMBL-CDS" id="CAH65395"/>
    </conflict>
</comment>
<proteinExistence type="evidence at transcript level"/>
<keyword id="KW-0053">Apoptosis</keyword>
<keyword id="KW-0963">Cytoplasm</keyword>
<keyword id="KW-0333">Golgi apparatus</keyword>
<keyword id="KW-0458">Lysosome</keyword>
<keyword id="KW-0496">Mitochondrion</keyword>
<keyword id="KW-0521">NADP</keyword>
<keyword id="KW-0560">Oxidoreductase</keyword>
<keyword id="KW-0597">Phosphoprotein</keyword>
<keyword id="KW-1185">Reference proteome</keyword>
<keyword id="KW-0677">Repeat</keyword>
<keyword id="KW-0879">Wnt signaling pathway</keyword>
<sequence length="414" mass="46730">MAALKYAGLEDTDSEEELPPGWEERTTKDGWVYYANHLEEKTQWEHPKSGKRKRVAGGLPYGWEQETDENGQVYFVDHINKRTTYLDPRLAFTVEDNPAKPPTRQKYDGNSTAMEILQGRDLSGKVIIITGANSGIGFETAKSFALHGAYVILACRNMSRGNDAVQRILEEWHKAKVEAMTLDLASLRSVQNFAEAFKSKNMPLHILVCNAAIFGSSWCLTEDGLESTFQVNHLGHFYLVQLLEDILRRSSPARVVVVSSESHRFTEIKDSSGKLDFSLLSPSKKEYWAMLAYNRSKLCNILFSNELNRRLSPHGVTSNSVHPGNMIYSSIHRNWWVYTLLFTLARPFTKSMQQGAATTVYCATAAELEGLGGMYFNNCCRCLPSAEARNELTAVALWELSERLIREQLGRRSP</sequence>
<organism>
    <name type="scientific">Gallus gallus</name>
    <name type="common">Chicken</name>
    <dbReference type="NCBI Taxonomy" id="9031"/>
    <lineage>
        <taxon>Eukaryota</taxon>
        <taxon>Metazoa</taxon>
        <taxon>Chordata</taxon>
        <taxon>Craniata</taxon>
        <taxon>Vertebrata</taxon>
        <taxon>Euteleostomi</taxon>
        <taxon>Archelosauria</taxon>
        <taxon>Archosauria</taxon>
        <taxon>Dinosauria</taxon>
        <taxon>Saurischia</taxon>
        <taxon>Theropoda</taxon>
        <taxon>Coelurosauria</taxon>
        <taxon>Aves</taxon>
        <taxon>Neognathae</taxon>
        <taxon>Galloanserae</taxon>
        <taxon>Galliformes</taxon>
        <taxon>Phasianidae</taxon>
        <taxon>Phasianinae</taxon>
        <taxon>Gallus</taxon>
    </lineage>
</organism>
<name>WWOX_CHICK</name>
<accession>Q5F389</accession>
<evidence type="ECO:0000250" key="1"/>
<evidence type="ECO:0000250" key="2">
    <source>
        <dbReference type="UniProtKB" id="Q9NZC7"/>
    </source>
</evidence>
<evidence type="ECO:0000255" key="3">
    <source>
        <dbReference type="PROSITE-ProRule" id="PRU00224"/>
    </source>
</evidence>
<evidence type="ECO:0000256" key="4">
    <source>
        <dbReference type="SAM" id="MobiDB-lite"/>
    </source>
</evidence>
<evidence type="ECO:0000305" key="5"/>
<reference key="1">
    <citation type="journal article" date="2005" name="Genome Biol.">
        <title>Full-length cDNAs from chicken bursal lymphocytes to facilitate gene function analysis.</title>
        <authorList>
            <person name="Caldwell R.B."/>
            <person name="Kierzek A.M."/>
            <person name="Arakawa H."/>
            <person name="Bezzubov Y."/>
            <person name="Zaim J."/>
            <person name="Fiedler P."/>
            <person name="Kutter S."/>
            <person name="Blagodatski A."/>
            <person name="Kostovska D."/>
            <person name="Koter M."/>
            <person name="Plachy J."/>
            <person name="Carninci P."/>
            <person name="Hayashizaki Y."/>
            <person name="Buerstedde J.-M."/>
        </authorList>
    </citation>
    <scope>NUCLEOTIDE SEQUENCE [LARGE SCALE MRNA]</scope>
    <source>
        <strain>CB</strain>
        <tissue>Bursa of Fabricius</tissue>
    </source>
</reference>